<organism>
    <name type="scientific">Listeria innocua serovar 6a (strain ATCC BAA-680 / CLIP 11262)</name>
    <dbReference type="NCBI Taxonomy" id="272626"/>
    <lineage>
        <taxon>Bacteria</taxon>
        <taxon>Bacillati</taxon>
        <taxon>Bacillota</taxon>
        <taxon>Bacilli</taxon>
        <taxon>Bacillales</taxon>
        <taxon>Listeriaceae</taxon>
        <taxon>Listeria</taxon>
    </lineage>
</organism>
<gene>
    <name evidence="1" type="primary">dxs</name>
    <name type="ordered locus">lin1402</name>
</gene>
<dbReference type="EC" id="2.2.1.7" evidence="1"/>
<dbReference type="EMBL" id="AL596168">
    <property type="protein sequence ID" value="CAC96633.1"/>
    <property type="molecule type" value="Genomic_DNA"/>
</dbReference>
<dbReference type="PIR" id="AI1607">
    <property type="entry name" value="AI1607"/>
</dbReference>
<dbReference type="SMR" id="Q92BZ0"/>
<dbReference type="STRING" id="272626.gene:17565733"/>
<dbReference type="KEGG" id="lin:tktB"/>
<dbReference type="eggNOG" id="COG1154">
    <property type="taxonomic scope" value="Bacteria"/>
</dbReference>
<dbReference type="HOGENOM" id="CLU_009227_1_4_9"/>
<dbReference type="UniPathway" id="UPA00064">
    <property type="reaction ID" value="UER00091"/>
</dbReference>
<dbReference type="Proteomes" id="UP000002513">
    <property type="component" value="Chromosome"/>
</dbReference>
<dbReference type="GO" id="GO:0005829">
    <property type="term" value="C:cytosol"/>
    <property type="evidence" value="ECO:0007669"/>
    <property type="project" value="TreeGrafter"/>
</dbReference>
<dbReference type="GO" id="GO:0008661">
    <property type="term" value="F:1-deoxy-D-xylulose-5-phosphate synthase activity"/>
    <property type="evidence" value="ECO:0007669"/>
    <property type="project" value="UniProtKB-UniRule"/>
</dbReference>
<dbReference type="GO" id="GO:0000287">
    <property type="term" value="F:magnesium ion binding"/>
    <property type="evidence" value="ECO:0007669"/>
    <property type="project" value="UniProtKB-UniRule"/>
</dbReference>
<dbReference type="GO" id="GO:0030976">
    <property type="term" value="F:thiamine pyrophosphate binding"/>
    <property type="evidence" value="ECO:0007669"/>
    <property type="project" value="UniProtKB-UniRule"/>
</dbReference>
<dbReference type="GO" id="GO:0052865">
    <property type="term" value="P:1-deoxy-D-xylulose 5-phosphate biosynthetic process"/>
    <property type="evidence" value="ECO:0007669"/>
    <property type="project" value="UniProtKB-UniPathway"/>
</dbReference>
<dbReference type="GO" id="GO:0019288">
    <property type="term" value="P:isopentenyl diphosphate biosynthetic process, methylerythritol 4-phosphate pathway"/>
    <property type="evidence" value="ECO:0007669"/>
    <property type="project" value="TreeGrafter"/>
</dbReference>
<dbReference type="GO" id="GO:0016114">
    <property type="term" value="P:terpenoid biosynthetic process"/>
    <property type="evidence" value="ECO:0007669"/>
    <property type="project" value="UniProtKB-UniRule"/>
</dbReference>
<dbReference type="GO" id="GO:0009228">
    <property type="term" value="P:thiamine biosynthetic process"/>
    <property type="evidence" value="ECO:0007669"/>
    <property type="project" value="UniProtKB-UniRule"/>
</dbReference>
<dbReference type="CDD" id="cd02007">
    <property type="entry name" value="TPP_DXS"/>
    <property type="match status" value="1"/>
</dbReference>
<dbReference type="CDD" id="cd07033">
    <property type="entry name" value="TPP_PYR_DXS_TK_like"/>
    <property type="match status" value="1"/>
</dbReference>
<dbReference type="FunFam" id="3.40.50.920:FF:000002">
    <property type="entry name" value="1-deoxy-D-xylulose-5-phosphate synthase"/>
    <property type="match status" value="1"/>
</dbReference>
<dbReference type="FunFam" id="3.40.50.970:FF:000030">
    <property type="entry name" value="1-deoxy-D-xylulose-5-phosphate synthase"/>
    <property type="match status" value="1"/>
</dbReference>
<dbReference type="Gene3D" id="3.40.50.920">
    <property type="match status" value="1"/>
</dbReference>
<dbReference type="Gene3D" id="3.40.50.970">
    <property type="match status" value="2"/>
</dbReference>
<dbReference type="HAMAP" id="MF_00315">
    <property type="entry name" value="DXP_synth"/>
    <property type="match status" value="1"/>
</dbReference>
<dbReference type="InterPro" id="IPR005477">
    <property type="entry name" value="Dxylulose-5-P_synthase"/>
</dbReference>
<dbReference type="InterPro" id="IPR029061">
    <property type="entry name" value="THDP-binding"/>
</dbReference>
<dbReference type="InterPro" id="IPR009014">
    <property type="entry name" value="Transketo_C/PFOR_II"/>
</dbReference>
<dbReference type="InterPro" id="IPR005475">
    <property type="entry name" value="Transketolase-like_Pyr-bd"/>
</dbReference>
<dbReference type="InterPro" id="IPR020826">
    <property type="entry name" value="Transketolase_BS"/>
</dbReference>
<dbReference type="InterPro" id="IPR033248">
    <property type="entry name" value="Transketolase_C"/>
</dbReference>
<dbReference type="InterPro" id="IPR049557">
    <property type="entry name" value="Transketolase_CS"/>
</dbReference>
<dbReference type="NCBIfam" id="TIGR00204">
    <property type="entry name" value="dxs"/>
    <property type="match status" value="1"/>
</dbReference>
<dbReference type="NCBIfam" id="NF003933">
    <property type="entry name" value="PRK05444.2-2"/>
    <property type="match status" value="1"/>
</dbReference>
<dbReference type="PANTHER" id="PTHR43322">
    <property type="entry name" value="1-D-DEOXYXYLULOSE 5-PHOSPHATE SYNTHASE-RELATED"/>
    <property type="match status" value="1"/>
</dbReference>
<dbReference type="PANTHER" id="PTHR43322:SF5">
    <property type="entry name" value="1-DEOXY-D-XYLULOSE-5-PHOSPHATE SYNTHASE, CHLOROPLASTIC"/>
    <property type="match status" value="1"/>
</dbReference>
<dbReference type="Pfam" id="PF13292">
    <property type="entry name" value="DXP_synthase_N"/>
    <property type="match status" value="1"/>
</dbReference>
<dbReference type="Pfam" id="PF02779">
    <property type="entry name" value="Transket_pyr"/>
    <property type="match status" value="1"/>
</dbReference>
<dbReference type="Pfam" id="PF02780">
    <property type="entry name" value="Transketolase_C"/>
    <property type="match status" value="1"/>
</dbReference>
<dbReference type="SMART" id="SM00861">
    <property type="entry name" value="Transket_pyr"/>
    <property type="match status" value="1"/>
</dbReference>
<dbReference type="SUPFAM" id="SSF52518">
    <property type="entry name" value="Thiamin diphosphate-binding fold (THDP-binding)"/>
    <property type="match status" value="2"/>
</dbReference>
<dbReference type="SUPFAM" id="SSF52922">
    <property type="entry name" value="TK C-terminal domain-like"/>
    <property type="match status" value="1"/>
</dbReference>
<dbReference type="PROSITE" id="PS00801">
    <property type="entry name" value="TRANSKETOLASE_1"/>
    <property type="match status" value="1"/>
</dbReference>
<dbReference type="PROSITE" id="PS00802">
    <property type="entry name" value="TRANSKETOLASE_2"/>
    <property type="match status" value="1"/>
</dbReference>
<comment type="function">
    <text evidence="1">Catalyzes the acyloin condensation reaction between C atoms 2 and 3 of pyruvate and glyceraldehyde 3-phosphate to yield 1-deoxy-D-xylulose-5-phosphate (DXP).</text>
</comment>
<comment type="catalytic activity">
    <reaction evidence="1">
        <text>D-glyceraldehyde 3-phosphate + pyruvate + H(+) = 1-deoxy-D-xylulose 5-phosphate + CO2</text>
        <dbReference type="Rhea" id="RHEA:12605"/>
        <dbReference type="ChEBI" id="CHEBI:15361"/>
        <dbReference type="ChEBI" id="CHEBI:15378"/>
        <dbReference type="ChEBI" id="CHEBI:16526"/>
        <dbReference type="ChEBI" id="CHEBI:57792"/>
        <dbReference type="ChEBI" id="CHEBI:59776"/>
        <dbReference type="EC" id="2.2.1.7"/>
    </reaction>
</comment>
<comment type="cofactor">
    <cofactor evidence="1">
        <name>Mg(2+)</name>
        <dbReference type="ChEBI" id="CHEBI:18420"/>
    </cofactor>
    <text evidence="1">Binds 1 Mg(2+) ion per subunit.</text>
</comment>
<comment type="cofactor">
    <cofactor evidence="1">
        <name>thiamine diphosphate</name>
        <dbReference type="ChEBI" id="CHEBI:58937"/>
    </cofactor>
    <text evidence="1">Binds 1 thiamine pyrophosphate per subunit.</text>
</comment>
<comment type="pathway">
    <text evidence="1">Metabolic intermediate biosynthesis; 1-deoxy-D-xylulose 5-phosphate biosynthesis; 1-deoxy-D-xylulose 5-phosphate from D-glyceraldehyde 3-phosphate and pyruvate: step 1/1.</text>
</comment>
<comment type="subunit">
    <text evidence="1">Homodimer.</text>
</comment>
<comment type="similarity">
    <text evidence="1">Belongs to the transketolase family. DXPS subfamily.</text>
</comment>
<proteinExistence type="inferred from homology"/>
<sequence>MSCFYLDLLKIKDPSFMKQLDIQELEALAADIRAFLITSTSKSGGHIGPNLGVVELTIALHYTFNSPNDKFIWDVGHQSYVHKILTGRASQFDTLRQHGGLDGFPKRKESIHDVFETGHSSTSLSAAVGMVIARDIKKEDFYVIPIIGDGALTGGMAFEALNHIGDMGKDMIVILNDNDMSIAPNVGALHNVLGKLRTSNTFQQTKTNIDKLMRKIPTAGEKLADTAEKAKDGIKHLLVEGTFFEELGFMYLGPIDGHNLEDVITNLEIAKRTKGPVLLHIITKKGKGYQPAELDSRGTWHGTGPYKVETGSFIKPAKTVASWSSVISNELMRLAANDERIVAITPAMPVGSKLEKFAKTFPERFFDVGIAEQHATTMAAGLATQAMKPFLAIYSTFLQRAYDQLVHDVCRQKLNVVIGIDRAGLVGADGETHQGIFDISFLNSIPNMIITMPKDEEEARQLMDTAFAYDDGPFAIRYPRGNGPGKELSESSKLIPIGEWETIIQPVDAVILTFGPTLEQALKAAEQLEDLGQRVGVINARFIKPLDEALLHRIFKQKIPILTVEESLLKGGFGASVLEFMEENNYTDVTIHRIGLPDEFIGHGSVPLILESYGISPTGIVLKINEMLAQSE</sequence>
<feature type="chain" id="PRO_0000189126" description="1-deoxy-D-xylulose-5-phosphate synthase">
    <location>
        <begin position="1"/>
        <end position="632"/>
    </location>
</feature>
<feature type="binding site" evidence="1">
    <location>
        <position position="77"/>
    </location>
    <ligand>
        <name>thiamine diphosphate</name>
        <dbReference type="ChEBI" id="CHEBI:58937"/>
    </ligand>
</feature>
<feature type="binding site" evidence="1">
    <location>
        <begin position="118"/>
        <end position="120"/>
    </location>
    <ligand>
        <name>thiamine diphosphate</name>
        <dbReference type="ChEBI" id="CHEBI:58937"/>
    </ligand>
</feature>
<feature type="binding site" evidence="1">
    <location>
        <position position="149"/>
    </location>
    <ligand>
        <name>Mg(2+)</name>
        <dbReference type="ChEBI" id="CHEBI:18420"/>
    </ligand>
</feature>
<feature type="binding site" evidence="1">
    <location>
        <begin position="150"/>
        <end position="151"/>
    </location>
    <ligand>
        <name>thiamine diphosphate</name>
        <dbReference type="ChEBI" id="CHEBI:58937"/>
    </ligand>
</feature>
<feature type="binding site" evidence="1">
    <location>
        <position position="178"/>
    </location>
    <ligand>
        <name>Mg(2+)</name>
        <dbReference type="ChEBI" id="CHEBI:18420"/>
    </ligand>
</feature>
<feature type="binding site" evidence="1">
    <location>
        <position position="178"/>
    </location>
    <ligand>
        <name>thiamine diphosphate</name>
        <dbReference type="ChEBI" id="CHEBI:58937"/>
    </ligand>
</feature>
<feature type="binding site" evidence="1">
    <location>
        <position position="289"/>
    </location>
    <ligand>
        <name>thiamine diphosphate</name>
        <dbReference type="ChEBI" id="CHEBI:58937"/>
    </ligand>
</feature>
<feature type="binding site" evidence="1">
    <location>
        <position position="372"/>
    </location>
    <ligand>
        <name>thiamine diphosphate</name>
        <dbReference type="ChEBI" id="CHEBI:58937"/>
    </ligand>
</feature>
<accession>Q92BZ0</accession>
<keyword id="KW-0414">Isoprene biosynthesis</keyword>
<keyword id="KW-0460">Magnesium</keyword>
<keyword id="KW-0479">Metal-binding</keyword>
<keyword id="KW-0784">Thiamine biosynthesis</keyword>
<keyword id="KW-0786">Thiamine pyrophosphate</keyword>
<keyword id="KW-0808">Transferase</keyword>
<reference key="1">
    <citation type="journal article" date="2001" name="Science">
        <title>Comparative genomics of Listeria species.</title>
        <authorList>
            <person name="Glaser P."/>
            <person name="Frangeul L."/>
            <person name="Buchrieser C."/>
            <person name="Rusniok C."/>
            <person name="Amend A."/>
            <person name="Baquero F."/>
            <person name="Berche P."/>
            <person name="Bloecker H."/>
            <person name="Brandt P."/>
            <person name="Chakraborty T."/>
            <person name="Charbit A."/>
            <person name="Chetouani F."/>
            <person name="Couve E."/>
            <person name="de Daruvar A."/>
            <person name="Dehoux P."/>
            <person name="Domann E."/>
            <person name="Dominguez-Bernal G."/>
            <person name="Duchaud E."/>
            <person name="Durant L."/>
            <person name="Dussurget O."/>
            <person name="Entian K.-D."/>
            <person name="Fsihi H."/>
            <person name="Garcia-del Portillo F."/>
            <person name="Garrido P."/>
            <person name="Gautier L."/>
            <person name="Goebel W."/>
            <person name="Gomez-Lopez N."/>
            <person name="Hain T."/>
            <person name="Hauf J."/>
            <person name="Jackson D."/>
            <person name="Jones L.-M."/>
            <person name="Kaerst U."/>
            <person name="Kreft J."/>
            <person name="Kuhn M."/>
            <person name="Kunst F."/>
            <person name="Kurapkat G."/>
            <person name="Madueno E."/>
            <person name="Maitournam A."/>
            <person name="Mata Vicente J."/>
            <person name="Ng E."/>
            <person name="Nedjari H."/>
            <person name="Nordsiek G."/>
            <person name="Novella S."/>
            <person name="de Pablos B."/>
            <person name="Perez-Diaz J.-C."/>
            <person name="Purcell R."/>
            <person name="Remmel B."/>
            <person name="Rose M."/>
            <person name="Schlueter T."/>
            <person name="Simoes N."/>
            <person name="Tierrez A."/>
            <person name="Vazquez-Boland J.-A."/>
            <person name="Voss H."/>
            <person name="Wehland J."/>
            <person name="Cossart P."/>
        </authorList>
    </citation>
    <scope>NUCLEOTIDE SEQUENCE [LARGE SCALE GENOMIC DNA]</scope>
    <source>
        <strain>ATCC BAA-680 / CLIP 11262</strain>
    </source>
</reference>
<evidence type="ECO:0000255" key="1">
    <source>
        <dbReference type="HAMAP-Rule" id="MF_00315"/>
    </source>
</evidence>
<protein>
    <recommendedName>
        <fullName evidence="1">1-deoxy-D-xylulose-5-phosphate synthase</fullName>
        <ecNumber evidence="1">2.2.1.7</ecNumber>
    </recommendedName>
    <alternativeName>
        <fullName evidence="1">1-deoxyxylulose-5-phosphate synthase</fullName>
        <shortName evidence="1">DXP synthase</shortName>
        <shortName evidence="1">DXPS</shortName>
    </alternativeName>
</protein>
<name>DXS_LISIN</name>